<proteinExistence type="inferred from homology"/>
<name>KCY_ACIBS</name>
<accession>B0VN00</accession>
<feature type="chain" id="PRO_1000100640" description="Cytidylate kinase">
    <location>
        <begin position="1"/>
        <end position="228"/>
    </location>
</feature>
<feature type="binding site" evidence="1">
    <location>
        <begin position="10"/>
        <end position="18"/>
    </location>
    <ligand>
        <name>ATP</name>
        <dbReference type="ChEBI" id="CHEBI:30616"/>
    </ligand>
</feature>
<gene>
    <name evidence="1" type="primary">cmk</name>
    <name type="ordered locus">ABSDF1737</name>
</gene>
<comment type="catalytic activity">
    <reaction evidence="1">
        <text>CMP + ATP = CDP + ADP</text>
        <dbReference type="Rhea" id="RHEA:11600"/>
        <dbReference type="ChEBI" id="CHEBI:30616"/>
        <dbReference type="ChEBI" id="CHEBI:58069"/>
        <dbReference type="ChEBI" id="CHEBI:60377"/>
        <dbReference type="ChEBI" id="CHEBI:456216"/>
        <dbReference type="EC" id="2.7.4.25"/>
    </reaction>
</comment>
<comment type="catalytic activity">
    <reaction evidence="1">
        <text>dCMP + ATP = dCDP + ADP</text>
        <dbReference type="Rhea" id="RHEA:25094"/>
        <dbReference type="ChEBI" id="CHEBI:30616"/>
        <dbReference type="ChEBI" id="CHEBI:57566"/>
        <dbReference type="ChEBI" id="CHEBI:58593"/>
        <dbReference type="ChEBI" id="CHEBI:456216"/>
        <dbReference type="EC" id="2.7.4.25"/>
    </reaction>
</comment>
<comment type="subcellular location">
    <subcellularLocation>
        <location evidence="1">Cytoplasm</location>
    </subcellularLocation>
</comment>
<comment type="similarity">
    <text evidence="1">Belongs to the cytidylate kinase family. Type 1 subfamily.</text>
</comment>
<dbReference type="EC" id="2.7.4.25" evidence="1"/>
<dbReference type="EMBL" id="CU468230">
    <property type="protein sequence ID" value="CAP01076.1"/>
    <property type="molecule type" value="Genomic_DNA"/>
</dbReference>
<dbReference type="SMR" id="B0VN00"/>
<dbReference type="KEGG" id="abm:ABSDF1737"/>
<dbReference type="HOGENOM" id="CLU_079959_2_0_6"/>
<dbReference type="Proteomes" id="UP000001741">
    <property type="component" value="Chromosome"/>
</dbReference>
<dbReference type="GO" id="GO:0005829">
    <property type="term" value="C:cytosol"/>
    <property type="evidence" value="ECO:0007669"/>
    <property type="project" value="TreeGrafter"/>
</dbReference>
<dbReference type="GO" id="GO:0005524">
    <property type="term" value="F:ATP binding"/>
    <property type="evidence" value="ECO:0007669"/>
    <property type="project" value="UniProtKB-UniRule"/>
</dbReference>
<dbReference type="GO" id="GO:0036430">
    <property type="term" value="F:CMP kinase activity"/>
    <property type="evidence" value="ECO:0007669"/>
    <property type="project" value="RHEA"/>
</dbReference>
<dbReference type="GO" id="GO:0036431">
    <property type="term" value="F:dCMP kinase activity"/>
    <property type="evidence" value="ECO:0007669"/>
    <property type="project" value="RHEA"/>
</dbReference>
<dbReference type="GO" id="GO:0015949">
    <property type="term" value="P:nucleobase-containing small molecule interconversion"/>
    <property type="evidence" value="ECO:0007669"/>
    <property type="project" value="TreeGrafter"/>
</dbReference>
<dbReference type="GO" id="GO:0006220">
    <property type="term" value="P:pyrimidine nucleotide metabolic process"/>
    <property type="evidence" value="ECO:0007669"/>
    <property type="project" value="UniProtKB-UniRule"/>
</dbReference>
<dbReference type="CDD" id="cd02020">
    <property type="entry name" value="CMPK"/>
    <property type="match status" value="1"/>
</dbReference>
<dbReference type="Gene3D" id="3.40.50.300">
    <property type="entry name" value="P-loop containing nucleotide triphosphate hydrolases"/>
    <property type="match status" value="1"/>
</dbReference>
<dbReference type="HAMAP" id="MF_00238">
    <property type="entry name" value="Cytidyl_kinase_type1"/>
    <property type="match status" value="1"/>
</dbReference>
<dbReference type="InterPro" id="IPR003136">
    <property type="entry name" value="Cytidylate_kin"/>
</dbReference>
<dbReference type="InterPro" id="IPR011994">
    <property type="entry name" value="Cytidylate_kinase_dom"/>
</dbReference>
<dbReference type="InterPro" id="IPR027417">
    <property type="entry name" value="P-loop_NTPase"/>
</dbReference>
<dbReference type="NCBIfam" id="TIGR00017">
    <property type="entry name" value="cmk"/>
    <property type="match status" value="1"/>
</dbReference>
<dbReference type="PANTHER" id="PTHR21299:SF2">
    <property type="entry name" value="CYTIDYLATE KINASE"/>
    <property type="match status" value="1"/>
</dbReference>
<dbReference type="PANTHER" id="PTHR21299">
    <property type="entry name" value="CYTIDYLATE KINASE/PANTOATE-BETA-ALANINE LIGASE"/>
    <property type="match status" value="1"/>
</dbReference>
<dbReference type="Pfam" id="PF02224">
    <property type="entry name" value="Cytidylate_kin"/>
    <property type="match status" value="1"/>
</dbReference>
<dbReference type="SUPFAM" id="SSF52540">
    <property type="entry name" value="P-loop containing nucleoside triphosphate hydrolases"/>
    <property type="match status" value="1"/>
</dbReference>
<reference key="1">
    <citation type="journal article" date="2008" name="PLoS ONE">
        <title>Comparative analysis of Acinetobacters: three genomes for three lifestyles.</title>
        <authorList>
            <person name="Vallenet D."/>
            <person name="Nordmann P."/>
            <person name="Barbe V."/>
            <person name="Poirel L."/>
            <person name="Mangenot S."/>
            <person name="Bataille E."/>
            <person name="Dossat C."/>
            <person name="Gas S."/>
            <person name="Kreimeyer A."/>
            <person name="Lenoble P."/>
            <person name="Oztas S."/>
            <person name="Poulain J."/>
            <person name="Segurens B."/>
            <person name="Robert C."/>
            <person name="Abergel C."/>
            <person name="Claverie J.-M."/>
            <person name="Raoult D."/>
            <person name="Medigue C."/>
            <person name="Weissenbach J."/>
            <person name="Cruveiller S."/>
        </authorList>
    </citation>
    <scope>NUCLEOTIDE SEQUENCE [LARGE SCALE GENOMIC DNA]</scope>
    <source>
        <strain>SDF</strain>
    </source>
</reference>
<keyword id="KW-0067">ATP-binding</keyword>
<keyword id="KW-0963">Cytoplasm</keyword>
<keyword id="KW-0418">Kinase</keyword>
<keyword id="KW-0547">Nucleotide-binding</keyword>
<keyword id="KW-0808">Transferase</keyword>
<organism>
    <name type="scientific">Acinetobacter baumannii (strain SDF)</name>
    <dbReference type="NCBI Taxonomy" id="509170"/>
    <lineage>
        <taxon>Bacteria</taxon>
        <taxon>Pseudomonadati</taxon>
        <taxon>Pseudomonadota</taxon>
        <taxon>Gammaproteobacteria</taxon>
        <taxon>Moraxellales</taxon>
        <taxon>Moraxellaceae</taxon>
        <taxon>Acinetobacter</taxon>
        <taxon>Acinetobacter calcoaceticus/baumannii complex</taxon>
    </lineage>
</organism>
<protein>
    <recommendedName>
        <fullName evidence="1">Cytidylate kinase</fullName>
        <shortName evidence="1">CK</shortName>
        <ecNumber evidence="1">2.7.4.25</ecNumber>
    </recommendedName>
    <alternativeName>
        <fullName evidence="1">Cytidine monophosphate kinase</fullName>
        <shortName evidence="1">CMP kinase</shortName>
    </alternativeName>
</protein>
<sequence length="228" mass="25222">MTVQIITIDGPSGSGKGTLAAKLAAYYQFHLLDSGALYRLLGLSLHKHDLLEKLDSHLDECVNYARQLNIKFETSAEGTLVFLDGEDVTQTIRTERVGEYASKVAAIPELRQALFERQRAFAQTPGLVADGRDMATSIFPEANAKIYLTASAESRAERRVKQLQGMGLDAKINDILANIQARDKRDMEREVAPLKPAGDAYIIDSSELTIDQVFKLMVDYVNSRTVSN</sequence>
<evidence type="ECO:0000255" key="1">
    <source>
        <dbReference type="HAMAP-Rule" id="MF_00238"/>
    </source>
</evidence>